<comment type="subcellular location">
    <subcellularLocation>
        <location evidence="2">Host membrane</location>
        <topology evidence="2">Multi-pass membrane protein</topology>
    </subcellularLocation>
</comment>
<comment type="similarity">
    <text evidence="2">Belongs to the plectrovirus ORF5 family.</text>
</comment>
<protein>
    <recommendedName>
        <fullName>Uncharacterized protein ORF5</fullName>
    </recommendedName>
    <alternativeName>
        <fullName>Gene 5 protein</fullName>
    </alternativeName>
</protein>
<sequence length="134" mass="15620">MINLLVENNNSNWDKIFSFVFDIFLFIFDVIWNTKLPMTNTSIAYFLIFFMVIKLSIYAIHGTSTQYNNLGSTVNNGVSQVYSSTVRGVSDTKQGMQKHIKERKQFKINRNKKQLSSLAKQAKTREQGYRRVHK</sequence>
<proteinExistence type="inferred from homology"/>
<gene>
    <name type="ORF">ORF5</name>
</gene>
<organismHost>
    <name type="scientific">Spiroplasma citri</name>
    <dbReference type="NCBI Taxonomy" id="2133"/>
</organismHost>
<evidence type="ECO:0000255" key="1"/>
<evidence type="ECO:0000305" key="2"/>
<keyword id="KW-1043">Host membrane</keyword>
<keyword id="KW-0472">Membrane</keyword>
<keyword id="KW-1185">Reference proteome</keyword>
<keyword id="KW-0812">Transmembrane</keyword>
<keyword id="KW-1133">Transmembrane helix</keyword>
<feature type="chain" id="PRO_0000065797" description="Uncharacterized protein ORF5">
    <location>
        <begin position="1"/>
        <end position="134"/>
    </location>
</feature>
<feature type="transmembrane region" description="Helical" evidence="1">
    <location>
        <begin position="16"/>
        <end position="36"/>
    </location>
</feature>
<feature type="transmembrane region" description="Helical" evidence="1">
    <location>
        <begin position="43"/>
        <end position="63"/>
    </location>
</feature>
<dbReference type="EMBL" id="X51344">
    <property type="protein sequence ID" value="CAA35726.1"/>
    <property type="molecule type" value="Genomic_DNA"/>
</dbReference>
<dbReference type="RefSeq" id="NP_040338.1">
    <property type="nucleotide sequence ID" value="NC_001365.1"/>
</dbReference>
<dbReference type="SMR" id="P15896"/>
<dbReference type="KEGG" id="vg:1260863"/>
<dbReference type="OrthoDB" id="33126at10239"/>
<dbReference type="Proteomes" id="UP000001252">
    <property type="component" value="Segment"/>
</dbReference>
<dbReference type="GO" id="GO:0033644">
    <property type="term" value="C:host cell membrane"/>
    <property type="evidence" value="ECO:0007669"/>
    <property type="project" value="UniProtKB-SubCell"/>
</dbReference>
<dbReference type="GO" id="GO:0016020">
    <property type="term" value="C:membrane"/>
    <property type="evidence" value="ECO:0007669"/>
    <property type="project" value="UniProtKB-KW"/>
</dbReference>
<organism>
    <name type="scientific">Spiroplasma virus SpV1-R8A2 B</name>
    <name type="common">SpV1</name>
    <name type="synonym">Spiroplasma virus 1</name>
    <dbReference type="NCBI Taxonomy" id="10854"/>
    <lineage>
        <taxon>Viruses</taxon>
        <taxon>Monodnaviria</taxon>
        <taxon>Loebvirae</taxon>
        <taxon>Hofneiviricota</taxon>
        <taxon>Faserviricetes</taxon>
        <taxon>Tubulavirales</taxon>
        <taxon>Plectroviridae</taxon>
        <taxon>Vespertiliovirus</taxon>
        <taxon>Vespertiliovirus R8A2B</taxon>
    </lineage>
</organism>
<reference key="1">
    <citation type="journal article" date="1990" name="Nucleic Acids Res.">
        <title>Complete nucleotide sequence of the genome of Spiroplasma citri virus SpV1-R8A2 B.</title>
        <authorList>
            <person name="Renaudin J."/>
            <person name="Aullo P."/>
            <person name="Vignault J.C."/>
            <person name="Bove J.M."/>
        </authorList>
    </citation>
    <scope>NUCLEOTIDE SEQUENCE [GENOMIC DNA]</scope>
</reference>
<accession>P15896</accession>
<name>ORF5_SPV1R</name>